<sequence length="983" mass="107557">MGMRPAARMPKLTRRSRTLIMVALGVIVLLLAGPRLVDAYVEWLWFGELGYRSVFSTVLVTRVVVFLVAGLVVGGIVFAGLAVAYRTRPVFVPSHDNDPVARYRAMALSRLRLIGVGIPAAIGLLAGIIAQSYWVRIQLFLHGDNFGIRDPQFGKDLGFYAFELPFYRLVLSYVFVAVFLAFVVNLLAHYIFGGIRLSGRTGALSRLARLQLVSLVGVLVLLKAVAYWLDRYELLSRTRSSKPFTGAGYTDINAVQPAKLILIAIALICAAAVFSAITLRDFRIPAIGLVLLMLSSLIVGTGWPLIVEQLIAKPDAVRKESEYIRRSITATRHAYGLTEDVVTYRNYIGDAPAIAQQIATDHATTSNIRLLDPTIVSPAFTQFQRGKNFYYFPDQLSIDRYLDKKGNLRDYVVAARELNPDRLIDNQRDWINRHTVYTHGNGFIASPANTVRGIANDPNQNGGYPQFLVNVVGNGTVVSEGPARLDQPRVYFGPVISNTSADYAIVGKNGDDREYDYETNTDTKRYTYAGSGGVPIGSWLSRSVFAAKFAERNFLFSSVIGSNSKILFNRDPAQRVEAVAPWLTTDSSVYPAIVNKRLVWIIDGYTTLDNYPYSERTSLSSATADSTEVAFNRLAPDKRVAYIRNSVKATVDAYDGAVTLYQQDEYDPVLKVWMKVFPGTVRPKGDITPELAEHLRYPEDLFKVQRMLLAKYHVNDPGTFFNTSDFWDVPLDPNPTASSYQPPYYIVAKNILKNDRSASYQLTSAMNRFKQDFLAAYISASSDPETYGKITVLTIPGNVNGPKLANNAITTDPAVSQDLGVIGRDNQNRIRWGNLLTLPVAQGGLLYVEPVYASPGVSDAASSYPRLIRVAMMYNDKIGYGPTVGDALTGLFGPGAASAATGIEPTEAVPPKSPAGSSTPPIAVVPSAPDGSVALSAAKAAALQEIQAVIGAAREAQKKGDFVAYGSALQRLDDAITKFNSTK</sequence>
<evidence type="ECO:0000255" key="1">
    <source>
        <dbReference type="HAMAP-Rule" id="MF_01600"/>
    </source>
</evidence>
<dbReference type="EMBL" id="FM211192">
    <property type="protein sequence ID" value="CAR70738.1"/>
    <property type="molecule type" value="Genomic_DNA"/>
</dbReference>
<dbReference type="SMR" id="B8ZUU1"/>
<dbReference type="KEGG" id="mlb:MLBr00644"/>
<dbReference type="HOGENOM" id="CLU_007733_1_0_11"/>
<dbReference type="Proteomes" id="UP000006900">
    <property type="component" value="Chromosome"/>
</dbReference>
<dbReference type="GO" id="GO:0005576">
    <property type="term" value="C:extracellular region"/>
    <property type="evidence" value="ECO:0007669"/>
    <property type="project" value="TreeGrafter"/>
</dbReference>
<dbReference type="GO" id="GO:0005886">
    <property type="term" value="C:plasma membrane"/>
    <property type="evidence" value="ECO:0007669"/>
    <property type="project" value="UniProtKB-SubCell"/>
</dbReference>
<dbReference type="HAMAP" id="MF_01600">
    <property type="entry name" value="UPF0182"/>
    <property type="match status" value="1"/>
</dbReference>
<dbReference type="InterPro" id="IPR005372">
    <property type="entry name" value="UPF0182"/>
</dbReference>
<dbReference type="NCBIfam" id="NF000825">
    <property type="entry name" value="PRK00068.1"/>
    <property type="match status" value="1"/>
</dbReference>
<dbReference type="NCBIfam" id="NF009097">
    <property type="entry name" value="PRK12438.1"/>
    <property type="match status" value="1"/>
</dbReference>
<dbReference type="PANTHER" id="PTHR39344">
    <property type="entry name" value="UPF0182 PROTEIN SLL1060"/>
    <property type="match status" value="1"/>
</dbReference>
<dbReference type="PANTHER" id="PTHR39344:SF1">
    <property type="entry name" value="UPF0182 PROTEIN SLL1060"/>
    <property type="match status" value="1"/>
</dbReference>
<dbReference type="Pfam" id="PF03699">
    <property type="entry name" value="UPF0182"/>
    <property type="match status" value="1"/>
</dbReference>
<comment type="subcellular location">
    <subcellularLocation>
        <location evidence="1">Cell membrane</location>
        <topology evidence="1">Multi-pass membrane protein</topology>
    </subcellularLocation>
</comment>
<comment type="similarity">
    <text evidence="1">Belongs to the UPF0182 family.</text>
</comment>
<feature type="chain" id="PRO_1000185784" description="UPF0182 protein MLBr00644">
    <location>
        <begin position="1"/>
        <end position="983"/>
    </location>
</feature>
<feature type="transmembrane region" description="Helical" evidence="1">
    <location>
        <begin position="19"/>
        <end position="39"/>
    </location>
</feature>
<feature type="transmembrane region" description="Helical" evidence="1">
    <location>
        <begin position="63"/>
        <end position="83"/>
    </location>
</feature>
<feature type="transmembrane region" description="Helical" evidence="1">
    <location>
        <begin position="113"/>
        <end position="133"/>
    </location>
</feature>
<feature type="transmembrane region" description="Helical" evidence="1">
    <location>
        <begin position="175"/>
        <end position="195"/>
    </location>
</feature>
<feature type="transmembrane region" description="Helical" evidence="1">
    <location>
        <begin position="210"/>
        <end position="230"/>
    </location>
</feature>
<feature type="transmembrane region" description="Helical" evidence="1">
    <location>
        <begin position="259"/>
        <end position="279"/>
    </location>
</feature>
<feature type="transmembrane region" description="Helical" evidence="1">
    <location>
        <begin position="287"/>
        <end position="307"/>
    </location>
</feature>
<name>Y644_MYCLB</name>
<gene>
    <name type="ordered locus">MLBr00644</name>
</gene>
<protein>
    <recommendedName>
        <fullName evidence="1">UPF0182 protein MLBr00644</fullName>
    </recommendedName>
</protein>
<proteinExistence type="inferred from homology"/>
<reference key="1">
    <citation type="journal article" date="2009" name="Nat. Genet.">
        <title>Comparative genomic and phylogeographic analysis of Mycobacterium leprae.</title>
        <authorList>
            <person name="Monot M."/>
            <person name="Honore N."/>
            <person name="Garnier T."/>
            <person name="Zidane N."/>
            <person name="Sherafi D."/>
            <person name="Paniz-Mondolfi A."/>
            <person name="Matsuoka M."/>
            <person name="Taylor G.M."/>
            <person name="Donoghue H.D."/>
            <person name="Bouwman A."/>
            <person name="Mays S."/>
            <person name="Watson C."/>
            <person name="Lockwood D."/>
            <person name="Khamispour A."/>
            <person name="Dowlati Y."/>
            <person name="Jianping S."/>
            <person name="Rea T.H."/>
            <person name="Vera-Cabrera L."/>
            <person name="Stefani M.M."/>
            <person name="Banu S."/>
            <person name="Macdonald M."/>
            <person name="Sapkota B.R."/>
            <person name="Spencer J.S."/>
            <person name="Thomas J."/>
            <person name="Harshman K."/>
            <person name="Singh P."/>
            <person name="Busso P."/>
            <person name="Gattiker A."/>
            <person name="Rougemont J."/>
            <person name="Brennan P.J."/>
            <person name="Cole S.T."/>
        </authorList>
    </citation>
    <scope>NUCLEOTIDE SEQUENCE [LARGE SCALE GENOMIC DNA]</scope>
    <source>
        <strain>Br4923</strain>
    </source>
</reference>
<organism>
    <name type="scientific">Mycobacterium leprae (strain Br4923)</name>
    <dbReference type="NCBI Taxonomy" id="561304"/>
    <lineage>
        <taxon>Bacteria</taxon>
        <taxon>Bacillati</taxon>
        <taxon>Actinomycetota</taxon>
        <taxon>Actinomycetes</taxon>
        <taxon>Mycobacteriales</taxon>
        <taxon>Mycobacteriaceae</taxon>
        <taxon>Mycobacterium</taxon>
    </lineage>
</organism>
<accession>B8ZUU1</accession>
<keyword id="KW-1003">Cell membrane</keyword>
<keyword id="KW-0472">Membrane</keyword>
<keyword id="KW-0812">Transmembrane</keyword>
<keyword id="KW-1133">Transmembrane helix</keyword>